<feature type="chain" id="PRO_1000014759" description="Large ribosomal subunit protein bL9">
    <location>
        <begin position="1"/>
        <end position="149"/>
    </location>
</feature>
<name>RL9_CAMC5</name>
<reference key="1">
    <citation type="submission" date="2007-07" db="EMBL/GenBank/DDBJ databases">
        <title>Genome sequence of Campylobacter curvus 525.92 isolated from human feces.</title>
        <authorList>
            <person name="Fouts D.E."/>
            <person name="Mongodin E.F."/>
            <person name="Puiu D."/>
            <person name="Sebastian Y."/>
            <person name="Miller W.G."/>
            <person name="Mandrell R.E."/>
            <person name="Lastovica A.J."/>
            <person name="Nelson K.E."/>
        </authorList>
    </citation>
    <scope>NUCLEOTIDE SEQUENCE [LARGE SCALE GENOMIC DNA]</scope>
    <source>
        <strain>525.92</strain>
    </source>
</reference>
<dbReference type="EMBL" id="CP000767">
    <property type="protein sequence ID" value="EAU00512.1"/>
    <property type="molecule type" value="Genomic_DNA"/>
</dbReference>
<dbReference type="RefSeq" id="WP_009651461.1">
    <property type="nucleotide sequence ID" value="NC_009715.2"/>
</dbReference>
<dbReference type="SMR" id="A7GYN5"/>
<dbReference type="STRING" id="360105.CCV52592_1975"/>
<dbReference type="GeneID" id="61002326"/>
<dbReference type="KEGG" id="ccv:CCV52592_1975"/>
<dbReference type="HOGENOM" id="CLU_078938_3_0_7"/>
<dbReference type="OrthoDB" id="9788336at2"/>
<dbReference type="Proteomes" id="UP000006380">
    <property type="component" value="Chromosome"/>
</dbReference>
<dbReference type="GO" id="GO:1990904">
    <property type="term" value="C:ribonucleoprotein complex"/>
    <property type="evidence" value="ECO:0007669"/>
    <property type="project" value="UniProtKB-KW"/>
</dbReference>
<dbReference type="GO" id="GO:0005840">
    <property type="term" value="C:ribosome"/>
    <property type="evidence" value="ECO:0007669"/>
    <property type="project" value="UniProtKB-KW"/>
</dbReference>
<dbReference type="GO" id="GO:0019843">
    <property type="term" value="F:rRNA binding"/>
    <property type="evidence" value="ECO:0007669"/>
    <property type="project" value="UniProtKB-UniRule"/>
</dbReference>
<dbReference type="GO" id="GO:0003735">
    <property type="term" value="F:structural constituent of ribosome"/>
    <property type="evidence" value="ECO:0007669"/>
    <property type="project" value="InterPro"/>
</dbReference>
<dbReference type="GO" id="GO:0006412">
    <property type="term" value="P:translation"/>
    <property type="evidence" value="ECO:0007669"/>
    <property type="project" value="UniProtKB-UniRule"/>
</dbReference>
<dbReference type="FunFam" id="3.40.5.10:FF:000002">
    <property type="entry name" value="50S ribosomal protein L9"/>
    <property type="match status" value="1"/>
</dbReference>
<dbReference type="Gene3D" id="3.10.430.100">
    <property type="entry name" value="Ribosomal protein L9, C-terminal domain"/>
    <property type="match status" value="1"/>
</dbReference>
<dbReference type="Gene3D" id="3.40.5.10">
    <property type="entry name" value="Ribosomal protein L9, N-terminal domain"/>
    <property type="match status" value="1"/>
</dbReference>
<dbReference type="HAMAP" id="MF_00503">
    <property type="entry name" value="Ribosomal_bL9"/>
    <property type="match status" value="1"/>
</dbReference>
<dbReference type="InterPro" id="IPR000244">
    <property type="entry name" value="Ribosomal_bL9"/>
</dbReference>
<dbReference type="InterPro" id="IPR009027">
    <property type="entry name" value="Ribosomal_bL9/RNase_H1_N"/>
</dbReference>
<dbReference type="InterPro" id="IPR020594">
    <property type="entry name" value="Ribosomal_bL9_bac/chp"/>
</dbReference>
<dbReference type="InterPro" id="IPR020069">
    <property type="entry name" value="Ribosomal_bL9_C"/>
</dbReference>
<dbReference type="InterPro" id="IPR036791">
    <property type="entry name" value="Ribosomal_bL9_C_sf"/>
</dbReference>
<dbReference type="InterPro" id="IPR020070">
    <property type="entry name" value="Ribosomal_bL9_N"/>
</dbReference>
<dbReference type="InterPro" id="IPR036935">
    <property type="entry name" value="Ribosomal_bL9_N_sf"/>
</dbReference>
<dbReference type="NCBIfam" id="TIGR00158">
    <property type="entry name" value="L9"/>
    <property type="match status" value="1"/>
</dbReference>
<dbReference type="PANTHER" id="PTHR21368">
    <property type="entry name" value="50S RIBOSOMAL PROTEIN L9"/>
    <property type="match status" value="1"/>
</dbReference>
<dbReference type="Pfam" id="PF03948">
    <property type="entry name" value="Ribosomal_L9_C"/>
    <property type="match status" value="1"/>
</dbReference>
<dbReference type="Pfam" id="PF01281">
    <property type="entry name" value="Ribosomal_L9_N"/>
    <property type="match status" value="1"/>
</dbReference>
<dbReference type="SUPFAM" id="SSF55658">
    <property type="entry name" value="L9 N-domain-like"/>
    <property type="match status" value="1"/>
</dbReference>
<dbReference type="SUPFAM" id="SSF55653">
    <property type="entry name" value="Ribosomal protein L9 C-domain"/>
    <property type="match status" value="1"/>
</dbReference>
<dbReference type="PROSITE" id="PS00651">
    <property type="entry name" value="RIBOSOMAL_L9"/>
    <property type="match status" value="1"/>
</dbReference>
<keyword id="KW-1185">Reference proteome</keyword>
<keyword id="KW-0687">Ribonucleoprotein</keyword>
<keyword id="KW-0689">Ribosomal protein</keyword>
<keyword id="KW-0694">RNA-binding</keyword>
<keyword id="KW-0699">rRNA-binding</keyword>
<protein>
    <recommendedName>
        <fullName evidence="1">Large ribosomal subunit protein bL9</fullName>
    </recommendedName>
    <alternativeName>
        <fullName evidence="2">50S ribosomal protein L9</fullName>
    </alternativeName>
</protein>
<organism>
    <name type="scientific">Campylobacter curvus (strain 525.92)</name>
    <dbReference type="NCBI Taxonomy" id="360105"/>
    <lineage>
        <taxon>Bacteria</taxon>
        <taxon>Pseudomonadati</taxon>
        <taxon>Campylobacterota</taxon>
        <taxon>Epsilonproteobacteria</taxon>
        <taxon>Campylobacterales</taxon>
        <taxon>Campylobacteraceae</taxon>
        <taxon>Campylobacter</taxon>
    </lineage>
</organism>
<accession>A7GYN5</accession>
<comment type="function">
    <text evidence="1">Binds to the 23S rRNA.</text>
</comment>
<comment type="similarity">
    <text evidence="1">Belongs to the bacterial ribosomal protein bL9 family.</text>
</comment>
<evidence type="ECO:0000255" key="1">
    <source>
        <dbReference type="HAMAP-Rule" id="MF_00503"/>
    </source>
</evidence>
<evidence type="ECO:0000305" key="2"/>
<gene>
    <name evidence="1" type="primary">rplI</name>
    <name type="ordered locus">Ccur92_10230</name>
    <name type="ORF">CCV52592_1975</name>
</gene>
<proteinExistence type="inferred from homology"/>
<sequence length="149" mass="16407">MKVLLIKDVKSLGKAGEIKEVKDGYGNNFLIGKGLAKAATPDVIRQYEAAQKRKEEELKYEISNLEKLKDELSKITLVIKKTLGANGSLFGSVSKEEIAEELEKAHHLIVDKKAIEIDKNHLKAVGLYDVQVKLGHAISATLKVDVQGE</sequence>